<protein>
    <recommendedName>
        <fullName evidence="1">S-adenosylmethionine:tRNA ribosyltransferase-isomerase</fullName>
        <ecNumber evidence="1">2.4.99.17</ecNumber>
    </recommendedName>
    <alternativeName>
        <fullName evidence="1">Queuosine biosynthesis protein QueA</fullName>
    </alternativeName>
</protein>
<reference key="1">
    <citation type="journal article" date="2011" name="J. Bacteriol.">
        <title>Comparative genomics of 28 Salmonella enterica isolates: evidence for CRISPR-mediated adaptive sublineage evolution.</title>
        <authorList>
            <person name="Fricke W.F."/>
            <person name="Mammel M.K."/>
            <person name="McDermott P.F."/>
            <person name="Tartera C."/>
            <person name="White D.G."/>
            <person name="Leclerc J.E."/>
            <person name="Ravel J."/>
            <person name="Cebula T.A."/>
        </authorList>
    </citation>
    <scope>NUCLEOTIDE SEQUENCE [LARGE SCALE GENOMIC DNA]</scope>
    <source>
        <strain>CVM19633</strain>
    </source>
</reference>
<name>QUEA_SALSV</name>
<keyword id="KW-0963">Cytoplasm</keyword>
<keyword id="KW-0671">Queuosine biosynthesis</keyword>
<keyword id="KW-0949">S-adenosyl-L-methionine</keyword>
<keyword id="KW-0808">Transferase</keyword>
<dbReference type="EC" id="2.4.99.17" evidence="1"/>
<dbReference type="EMBL" id="CP001127">
    <property type="protein sequence ID" value="ACF88719.1"/>
    <property type="molecule type" value="Genomic_DNA"/>
</dbReference>
<dbReference type="RefSeq" id="WP_001266524.1">
    <property type="nucleotide sequence ID" value="NC_011094.1"/>
</dbReference>
<dbReference type="SMR" id="B4TZH8"/>
<dbReference type="KEGG" id="sew:SeSA_A0462"/>
<dbReference type="HOGENOM" id="CLU_039110_1_0_6"/>
<dbReference type="UniPathway" id="UPA00392"/>
<dbReference type="Proteomes" id="UP000001865">
    <property type="component" value="Chromosome"/>
</dbReference>
<dbReference type="GO" id="GO:0005737">
    <property type="term" value="C:cytoplasm"/>
    <property type="evidence" value="ECO:0007669"/>
    <property type="project" value="UniProtKB-SubCell"/>
</dbReference>
<dbReference type="GO" id="GO:0051075">
    <property type="term" value="F:S-adenosylmethionine:tRNA ribosyltransferase-isomerase activity"/>
    <property type="evidence" value="ECO:0007669"/>
    <property type="project" value="UniProtKB-EC"/>
</dbReference>
<dbReference type="GO" id="GO:0008616">
    <property type="term" value="P:queuosine biosynthetic process"/>
    <property type="evidence" value="ECO:0007669"/>
    <property type="project" value="UniProtKB-UniRule"/>
</dbReference>
<dbReference type="GO" id="GO:0002099">
    <property type="term" value="P:tRNA wobble guanine modification"/>
    <property type="evidence" value="ECO:0007669"/>
    <property type="project" value="TreeGrafter"/>
</dbReference>
<dbReference type="FunFam" id="2.40.10.240:FF:000001">
    <property type="entry name" value="S-adenosylmethionine:tRNA ribosyltransferase-isomerase"/>
    <property type="match status" value="1"/>
</dbReference>
<dbReference type="FunFam" id="3.40.1780.10:FF:000001">
    <property type="entry name" value="S-adenosylmethionine:tRNA ribosyltransferase-isomerase"/>
    <property type="match status" value="1"/>
</dbReference>
<dbReference type="Gene3D" id="2.40.10.240">
    <property type="entry name" value="QueA-like"/>
    <property type="match status" value="1"/>
</dbReference>
<dbReference type="Gene3D" id="3.40.1780.10">
    <property type="entry name" value="QueA-like"/>
    <property type="match status" value="1"/>
</dbReference>
<dbReference type="HAMAP" id="MF_00113">
    <property type="entry name" value="QueA"/>
    <property type="match status" value="1"/>
</dbReference>
<dbReference type="InterPro" id="IPR003699">
    <property type="entry name" value="QueA"/>
</dbReference>
<dbReference type="InterPro" id="IPR042118">
    <property type="entry name" value="QueA_dom1"/>
</dbReference>
<dbReference type="InterPro" id="IPR042119">
    <property type="entry name" value="QueA_dom2"/>
</dbReference>
<dbReference type="InterPro" id="IPR036100">
    <property type="entry name" value="QueA_sf"/>
</dbReference>
<dbReference type="NCBIfam" id="NF001140">
    <property type="entry name" value="PRK00147.1"/>
    <property type="match status" value="1"/>
</dbReference>
<dbReference type="NCBIfam" id="TIGR00113">
    <property type="entry name" value="queA"/>
    <property type="match status" value="1"/>
</dbReference>
<dbReference type="PANTHER" id="PTHR30307">
    <property type="entry name" value="S-ADENOSYLMETHIONINE:TRNA RIBOSYLTRANSFERASE-ISOMERASE"/>
    <property type="match status" value="1"/>
</dbReference>
<dbReference type="PANTHER" id="PTHR30307:SF0">
    <property type="entry name" value="S-ADENOSYLMETHIONINE:TRNA RIBOSYLTRANSFERASE-ISOMERASE"/>
    <property type="match status" value="1"/>
</dbReference>
<dbReference type="Pfam" id="PF02547">
    <property type="entry name" value="Queuosine_synth"/>
    <property type="match status" value="1"/>
</dbReference>
<dbReference type="SUPFAM" id="SSF111337">
    <property type="entry name" value="QueA-like"/>
    <property type="match status" value="1"/>
</dbReference>
<evidence type="ECO:0000255" key="1">
    <source>
        <dbReference type="HAMAP-Rule" id="MF_00113"/>
    </source>
</evidence>
<sequence>MRVTDFSFELPESLIAHYPQPERSRCRLLSLEGPTGALTHGTFTDLLDKLNPGDLLVFNNTRVIPARLFGRKASGGKIEVLVERMLDDKRILAHIRASKAPKPGTELLLGDDESIHATMTARHGALFEVEFNDPRPVLDILNAIGHMPLPPYIDRPDEDADRELYQTVYSEKPGAVAAPTAGLHFDEPLLAALREKGIEMAFVTLHVGAGTFQPVRVDTIEDHIMHSEYAEVPQEVVDAVLAAKARGNRVIAVGTTSVRSLESAAQAAKSDLIEPFFGDTQIFIYPGYQYKVIDALITNFHLPESTLIMLVSAFAGYQHTMNAYKTAVEQKYRFFSYGDAMFITYNPQAIFERP</sequence>
<proteinExistence type="inferred from homology"/>
<feature type="chain" id="PRO_1000094816" description="S-adenosylmethionine:tRNA ribosyltransferase-isomerase">
    <location>
        <begin position="1"/>
        <end position="354"/>
    </location>
</feature>
<gene>
    <name evidence="1" type="primary">queA</name>
    <name type="ordered locus">SeSA_A0462</name>
</gene>
<comment type="function">
    <text evidence="1">Transfers and isomerizes the ribose moiety from AdoMet to the 7-aminomethyl group of 7-deazaguanine (preQ1-tRNA) to give epoxyqueuosine (oQ-tRNA).</text>
</comment>
<comment type="catalytic activity">
    <reaction evidence="1">
        <text>7-aminomethyl-7-carbaguanosine(34) in tRNA + S-adenosyl-L-methionine = epoxyqueuosine(34) in tRNA + adenine + L-methionine + 2 H(+)</text>
        <dbReference type="Rhea" id="RHEA:32155"/>
        <dbReference type="Rhea" id="RHEA-COMP:10342"/>
        <dbReference type="Rhea" id="RHEA-COMP:18582"/>
        <dbReference type="ChEBI" id="CHEBI:15378"/>
        <dbReference type="ChEBI" id="CHEBI:16708"/>
        <dbReference type="ChEBI" id="CHEBI:57844"/>
        <dbReference type="ChEBI" id="CHEBI:59789"/>
        <dbReference type="ChEBI" id="CHEBI:82833"/>
        <dbReference type="ChEBI" id="CHEBI:194443"/>
        <dbReference type="EC" id="2.4.99.17"/>
    </reaction>
</comment>
<comment type="pathway">
    <text evidence="1">tRNA modification; tRNA-queuosine biosynthesis.</text>
</comment>
<comment type="subunit">
    <text evidence="1">Monomer.</text>
</comment>
<comment type="subcellular location">
    <subcellularLocation>
        <location evidence="1">Cytoplasm</location>
    </subcellularLocation>
</comment>
<comment type="similarity">
    <text evidence="1">Belongs to the QueA family.</text>
</comment>
<accession>B4TZH8</accession>
<organism>
    <name type="scientific">Salmonella schwarzengrund (strain CVM19633)</name>
    <dbReference type="NCBI Taxonomy" id="439843"/>
    <lineage>
        <taxon>Bacteria</taxon>
        <taxon>Pseudomonadati</taxon>
        <taxon>Pseudomonadota</taxon>
        <taxon>Gammaproteobacteria</taxon>
        <taxon>Enterobacterales</taxon>
        <taxon>Enterobacteriaceae</taxon>
        <taxon>Salmonella</taxon>
    </lineage>
</organism>